<keyword id="KW-0002">3D-structure</keyword>
<keyword id="KW-0997">Cell inner membrane</keyword>
<keyword id="KW-1003">Cell membrane</keyword>
<keyword id="KW-0472">Membrane</keyword>
<keyword id="KW-1185">Reference proteome</keyword>
<keyword id="KW-0812">Transmembrane</keyword>
<keyword id="KW-1133">Transmembrane helix</keyword>
<organism>
    <name type="scientific">Shigella flexneri</name>
    <dbReference type="NCBI Taxonomy" id="623"/>
    <lineage>
        <taxon>Bacteria</taxon>
        <taxon>Pseudomonadati</taxon>
        <taxon>Pseudomonadota</taxon>
        <taxon>Gammaproteobacteria</taxon>
        <taxon>Enterobacterales</taxon>
        <taxon>Enterobacteriaceae</taxon>
        <taxon>Shigella</taxon>
    </lineage>
</organism>
<name>LPTC_SHIFL</name>
<reference key="1">
    <citation type="journal article" date="2002" name="Nucleic Acids Res.">
        <title>Genome sequence of Shigella flexneri 2a: insights into pathogenicity through comparison with genomes of Escherichia coli K12 and O157.</title>
        <authorList>
            <person name="Jin Q."/>
            <person name="Yuan Z."/>
            <person name="Xu J."/>
            <person name="Wang Y."/>
            <person name="Shen Y."/>
            <person name="Lu W."/>
            <person name="Wang J."/>
            <person name="Liu H."/>
            <person name="Yang J."/>
            <person name="Yang F."/>
            <person name="Zhang X."/>
            <person name="Zhang J."/>
            <person name="Yang G."/>
            <person name="Wu H."/>
            <person name="Qu D."/>
            <person name="Dong J."/>
            <person name="Sun L."/>
            <person name="Xue Y."/>
            <person name="Zhao A."/>
            <person name="Gao Y."/>
            <person name="Zhu J."/>
            <person name="Kan B."/>
            <person name="Ding K."/>
            <person name="Chen S."/>
            <person name="Cheng H."/>
            <person name="Yao Z."/>
            <person name="He B."/>
            <person name="Chen R."/>
            <person name="Ma D."/>
            <person name="Qiang B."/>
            <person name="Wen Y."/>
            <person name="Hou Y."/>
            <person name="Yu J."/>
        </authorList>
    </citation>
    <scope>NUCLEOTIDE SEQUENCE [LARGE SCALE GENOMIC DNA]</scope>
    <source>
        <strain>301 / Serotype 2a</strain>
    </source>
</reference>
<reference key="2">
    <citation type="journal article" date="2003" name="Infect. Immun.">
        <title>Complete genome sequence and comparative genomics of Shigella flexneri serotype 2a strain 2457T.</title>
        <authorList>
            <person name="Wei J."/>
            <person name="Goldberg M.B."/>
            <person name="Burland V."/>
            <person name="Venkatesan M.M."/>
            <person name="Deng W."/>
            <person name="Fournier G."/>
            <person name="Mayhew G.F."/>
            <person name="Plunkett G. III"/>
            <person name="Rose D.J."/>
            <person name="Darling A."/>
            <person name="Mau B."/>
            <person name="Perna N.T."/>
            <person name="Payne S.M."/>
            <person name="Runyen-Janecky L.J."/>
            <person name="Zhou S."/>
            <person name="Schwartz D.C."/>
            <person name="Blattner F.R."/>
        </authorList>
    </citation>
    <scope>NUCLEOTIDE SEQUENCE [LARGE SCALE GENOMIC DNA]</scope>
    <source>
        <strain>ATCC 700930 / 2457T / Serotype 2a</strain>
    </source>
</reference>
<dbReference type="EMBL" id="AE005674">
    <property type="protein sequence ID" value="AAN44705.1"/>
    <property type="molecule type" value="Genomic_DNA"/>
</dbReference>
<dbReference type="EMBL" id="AE014073">
    <property type="protein sequence ID" value="AAP18519.1"/>
    <property type="molecule type" value="Genomic_DNA"/>
</dbReference>
<dbReference type="RefSeq" id="WP_000030537.1">
    <property type="nucleotide sequence ID" value="NZ_WPGW01000004.1"/>
</dbReference>
<dbReference type="PDB" id="6S8N">
    <property type="method" value="EM"/>
    <property type="resolution" value="3.10 A"/>
    <property type="chains" value="C=1-191"/>
</dbReference>
<dbReference type="PDBsum" id="6S8N"/>
<dbReference type="SMR" id="P0ADW2"/>
<dbReference type="STRING" id="198214.SF3239"/>
<dbReference type="PaxDb" id="198214-SF3239"/>
<dbReference type="GeneID" id="75206055"/>
<dbReference type="KEGG" id="sfl:SF3239"/>
<dbReference type="KEGG" id="sfx:S3457"/>
<dbReference type="PATRIC" id="fig|198214.7.peg.3840"/>
<dbReference type="HOGENOM" id="CLU_105814_2_1_6"/>
<dbReference type="Proteomes" id="UP000001006">
    <property type="component" value="Chromosome"/>
</dbReference>
<dbReference type="Proteomes" id="UP000002673">
    <property type="component" value="Chromosome"/>
</dbReference>
<dbReference type="GO" id="GO:0030288">
    <property type="term" value="C:outer membrane-bounded periplasmic space"/>
    <property type="evidence" value="ECO:0007669"/>
    <property type="project" value="TreeGrafter"/>
</dbReference>
<dbReference type="GO" id="GO:0005886">
    <property type="term" value="C:plasma membrane"/>
    <property type="evidence" value="ECO:0007669"/>
    <property type="project" value="UniProtKB-SubCell"/>
</dbReference>
<dbReference type="GO" id="GO:0017089">
    <property type="term" value="F:glycolipid transfer activity"/>
    <property type="evidence" value="ECO:0007669"/>
    <property type="project" value="TreeGrafter"/>
</dbReference>
<dbReference type="GO" id="GO:0015221">
    <property type="term" value="F:lipopolysaccharide transmembrane transporter activity"/>
    <property type="evidence" value="ECO:0007669"/>
    <property type="project" value="InterPro"/>
</dbReference>
<dbReference type="GO" id="GO:0043165">
    <property type="term" value="P:Gram-negative-bacterium-type cell outer membrane assembly"/>
    <property type="evidence" value="ECO:0007669"/>
    <property type="project" value="UniProtKB-UniRule"/>
</dbReference>
<dbReference type="FunFam" id="2.60.450.10:FF:000001">
    <property type="entry name" value="Lipopolysaccharide export system protein LptC"/>
    <property type="match status" value="1"/>
</dbReference>
<dbReference type="Gene3D" id="2.60.450.10">
    <property type="entry name" value="Lipopolysaccharide (LPS) transport protein A like domain"/>
    <property type="match status" value="1"/>
</dbReference>
<dbReference type="HAMAP" id="MF_01915">
    <property type="entry name" value="LPS_assembly_LptC"/>
    <property type="match status" value="1"/>
</dbReference>
<dbReference type="InterPro" id="IPR010664">
    <property type="entry name" value="LipoPS_assembly_LptC-rel"/>
</dbReference>
<dbReference type="InterPro" id="IPR052363">
    <property type="entry name" value="LPS_export_LptC"/>
</dbReference>
<dbReference type="InterPro" id="IPR026265">
    <property type="entry name" value="LptC"/>
</dbReference>
<dbReference type="NCBIfam" id="TIGR04409">
    <property type="entry name" value="LptC_YrbK"/>
    <property type="match status" value="1"/>
</dbReference>
<dbReference type="NCBIfam" id="NF008142">
    <property type="entry name" value="PRK10893.1"/>
    <property type="match status" value="1"/>
</dbReference>
<dbReference type="PANTHER" id="PTHR37481">
    <property type="entry name" value="LIPOPOLYSACCHARIDE EXPORT SYSTEM PROTEIN LPTC"/>
    <property type="match status" value="1"/>
</dbReference>
<dbReference type="PANTHER" id="PTHR37481:SF1">
    <property type="entry name" value="LIPOPOLYSACCHARIDE EXPORT SYSTEM PROTEIN LPTC"/>
    <property type="match status" value="1"/>
</dbReference>
<dbReference type="Pfam" id="PF06835">
    <property type="entry name" value="LptC"/>
    <property type="match status" value="1"/>
</dbReference>
<dbReference type="PIRSF" id="PIRSF028513">
    <property type="entry name" value="LptC"/>
    <property type="match status" value="1"/>
</dbReference>
<proteinExistence type="evidence at protein level"/>
<gene>
    <name evidence="1" type="primary">lptC</name>
    <name type="ordered locus">SF3239</name>
    <name type="ordered locus">S3457</name>
</gene>
<protein>
    <recommendedName>
        <fullName evidence="1">Lipopolysaccharide export system protein LptC</fullName>
    </recommendedName>
</protein>
<evidence type="ECO:0000255" key="1">
    <source>
        <dbReference type="HAMAP-Rule" id="MF_01915"/>
    </source>
</evidence>
<evidence type="ECO:0007829" key="2">
    <source>
        <dbReference type="PDB" id="6S8N"/>
    </source>
</evidence>
<accession>P0ADW2</accession>
<accession>P45397</accession>
<feature type="chain" id="PRO_0000169473" description="Lipopolysaccharide export system protein LptC">
    <location>
        <begin position="1"/>
        <end position="191"/>
    </location>
</feature>
<feature type="transmembrane region" description="Helical" evidence="1">
    <location>
        <begin position="7"/>
        <end position="25"/>
    </location>
</feature>
<feature type="helix" evidence="2">
    <location>
        <begin position="6"/>
        <end position="22"/>
    </location>
</feature>
<comment type="function">
    <text evidence="1">Involved in the assembly of lipopolysaccharide (LPS). Required for the translocation of LPS from the inner membrane to the outer membrane. Facilitates the transfer of LPS from the inner membrane to the periplasmic protein LptA. Could be a docking site for LptA.</text>
</comment>
<comment type="subunit">
    <text evidence="1">Component of the lipopolysaccharide transport and assembly complex. Interacts with LptA and the LptBFG transporter complex.</text>
</comment>
<comment type="subcellular location">
    <subcellularLocation>
        <location evidence="1">Cell inner membrane</location>
        <topology evidence="1">Single-pass membrane protein</topology>
    </subcellularLocation>
</comment>
<comment type="similarity">
    <text evidence="1">Belongs to the LptC family.</text>
</comment>
<sequence>MSKARRWVIIVLSLAVLVMIGINMAEKDDTAQVVVNNNDPTYKSEHTDTLVYNPEGALSYRLIAQHVEYYSDQAVSWFTQPVLTTFDKDKIPTWSVKADKAKLTNDRMLYLYGHVEVNALVPDSQLRRITTDNAQINLVTQDVTSEDLVTLYGTTFNSSGLKMRGNLRSKNAELIEKVRTSYEIQNKQTQP</sequence>